<evidence type="ECO:0000250" key="1">
    <source>
        <dbReference type="UniProtKB" id="P68363"/>
    </source>
</evidence>
<evidence type="ECO:0000250" key="2">
    <source>
        <dbReference type="UniProtKB" id="Q13509"/>
    </source>
</evidence>
<evidence type="ECO:0000256" key="3">
    <source>
        <dbReference type="SAM" id="MobiDB-lite"/>
    </source>
</evidence>
<evidence type="ECO:0000305" key="4"/>
<comment type="function">
    <text>Tubulin is the major constituent of microtubules, a cylinder consisting of laterally associated linear protofilaments composed of alpha- and beta-tubulin heterodimers. Microtubules grow by the addition of GTP-tubulin dimers to the microtubule end, where a stabilizing cap forms. Below the cap, tubulin dimers are in GDP-bound state, owing to GTPase activity of alpha-tubulin.</text>
</comment>
<comment type="cofactor">
    <cofactor evidence="1">
        <name>Mg(2+)</name>
        <dbReference type="ChEBI" id="CHEBI:18420"/>
    </cofactor>
</comment>
<comment type="subunit">
    <text>Dimer of alpha and beta chains. A typical microtubule is a hollow water-filled tube with an outer diameter of 25 nm and an inner diameter of 15 nM. Alpha-beta heterodimers associate head-to-tail to form protofilaments running lengthwise along the microtubule wall with the beta-tubulin subunit facing the microtubule plus end conferring a structural polarity. Microtubules usually have 13 protofilaments but different protofilament numbers can be found in some organisms and specialized cells.</text>
</comment>
<comment type="subcellular location">
    <subcellularLocation>
        <location>Cytoplasm</location>
        <location>Cytoskeleton</location>
    </subcellularLocation>
</comment>
<comment type="similarity">
    <text evidence="4">Belongs to the tubulin family.</text>
</comment>
<sequence>MREIVHLQTGQCGNQIGAAFWQTISGEHGLDGSGVYNGTSDLQLERMNVYFNEASGNKFVPRAVLVDLEPGTMDAVRAGPFGQLFRPDNFVFGQSGAGNNWAKGHYTEGAELVDQVLDVVRREAEGCDCLQGFQITHSLGGGTGAGMGTLLISKIREEFPDRMMATFSVVPSPKVSDTVVEPYNATLSVHQLVENSDETFCIDNEALYDICMRTLKLNNPSYGDLNHLVSAVMSGVTTCLRFPGQLNSDLRKLAVNMVPFPRLHFFMVGFAPLTSRGAHSFRAVTVPELTQQMFDPKNMMAASDFRNGRYLTSSAIFRGKVSMKEVEDQMRNVQNKNSSYFVEWIPNNVQTALCSIPPRGLKMSSTFVGNSTSIQELFKRVGDQFTAMFRRKAFLHWYTGEGMDEMEFTEAESNMNDLVSEYQQYQEASVSEGEEEYDEEAPLEGEE</sequence>
<keyword id="KW-0963">Cytoplasm</keyword>
<keyword id="KW-0206">Cytoskeleton</keyword>
<keyword id="KW-0342">GTP-binding</keyword>
<keyword id="KW-0460">Magnesium</keyword>
<keyword id="KW-0479">Metal-binding</keyword>
<keyword id="KW-0493">Microtubule</keyword>
<keyword id="KW-0547">Nucleotide-binding</keyword>
<accession>P41388</accession>
<proteinExistence type="inferred from homology"/>
<dbReference type="EMBL" id="M97951">
    <property type="protein sequence ID" value="AAA34230.1"/>
    <property type="molecule type" value="Genomic_DNA"/>
</dbReference>
<dbReference type="SMR" id="P41388"/>
<dbReference type="PHI-base" id="PHI:820"/>
<dbReference type="GO" id="GO:0005737">
    <property type="term" value="C:cytoplasm"/>
    <property type="evidence" value="ECO:0007669"/>
    <property type="project" value="UniProtKB-KW"/>
</dbReference>
<dbReference type="GO" id="GO:0005874">
    <property type="term" value="C:microtubule"/>
    <property type="evidence" value="ECO:0007669"/>
    <property type="project" value="UniProtKB-KW"/>
</dbReference>
<dbReference type="GO" id="GO:0005525">
    <property type="term" value="F:GTP binding"/>
    <property type="evidence" value="ECO:0007669"/>
    <property type="project" value="UniProtKB-KW"/>
</dbReference>
<dbReference type="GO" id="GO:0003924">
    <property type="term" value="F:GTPase activity"/>
    <property type="evidence" value="ECO:0007669"/>
    <property type="project" value="InterPro"/>
</dbReference>
<dbReference type="GO" id="GO:0046872">
    <property type="term" value="F:metal ion binding"/>
    <property type="evidence" value="ECO:0007669"/>
    <property type="project" value="UniProtKB-KW"/>
</dbReference>
<dbReference type="GO" id="GO:0005200">
    <property type="term" value="F:structural constituent of cytoskeleton"/>
    <property type="evidence" value="ECO:0007669"/>
    <property type="project" value="InterPro"/>
</dbReference>
<dbReference type="GO" id="GO:0007017">
    <property type="term" value="P:microtubule-based process"/>
    <property type="evidence" value="ECO:0007669"/>
    <property type="project" value="InterPro"/>
</dbReference>
<dbReference type="CDD" id="cd02187">
    <property type="entry name" value="beta_tubulin"/>
    <property type="match status" value="1"/>
</dbReference>
<dbReference type="FunFam" id="1.10.287.600:FF:000003">
    <property type="entry name" value="Tubulin beta chain"/>
    <property type="match status" value="1"/>
</dbReference>
<dbReference type="FunFam" id="3.30.1330.20:FF:000002">
    <property type="entry name" value="Tubulin beta chain"/>
    <property type="match status" value="1"/>
</dbReference>
<dbReference type="FunFam" id="3.40.50.1440:FF:000009">
    <property type="entry name" value="Tubulin beta chain"/>
    <property type="match status" value="1"/>
</dbReference>
<dbReference type="Gene3D" id="1.10.287.600">
    <property type="entry name" value="Helix hairpin bin"/>
    <property type="match status" value="1"/>
</dbReference>
<dbReference type="Gene3D" id="3.30.1330.20">
    <property type="entry name" value="Tubulin/FtsZ, C-terminal domain"/>
    <property type="match status" value="1"/>
</dbReference>
<dbReference type="Gene3D" id="3.40.50.1440">
    <property type="entry name" value="Tubulin/FtsZ, GTPase domain"/>
    <property type="match status" value="1"/>
</dbReference>
<dbReference type="InterPro" id="IPR013838">
    <property type="entry name" value="Beta-tubulin_BS"/>
</dbReference>
<dbReference type="InterPro" id="IPR002453">
    <property type="entry name" value="Beta_tubulin"/>
</dbReference>
<dbReference type="InterPro" id="IPR008280">
    <property type="entry name" value="Tub_FtsZ_C"/>
</dbReference>
<dbReference type="InterPro" id="IPR000217">
    <property type="entry name" value="Tubulin"/>
</dbReference>
<dbReference type="InterPro" id="IPR037103">
    <property type="entry name" value="Tubulin/FtsZ-like_C"/>
</dbReference>
<dbReference type="InterPro" id="IPR018316">
    <property type="entry name" value="Tubulin/FtsZ_2-layer-sand-dom"/>
</dbReference>
<dbReference type="InterPro" id="IPR036525">
    <property type="entry name" value="Tubulin/FtsZ_GTPase_sf"/>
</dbReference>
<dbReference type="InterPro" id="IPR023123">
    <property type="entry name" value="Tubulin_C"/>
</dbReference>
<dbReference type="InterPro" id="IPR017975">
    <property type="entry name" value="Tubulin_CS"/>
</dbReference>
<dbReference type="InterPro" id="IPR003008">
    <property type="entry name" value="Tubulin_FtsZ_GTPase"/>
</dbReference>
<dbReference type="PANTHER" id="PTHR11588">
    <property type="entry name" value="TUBULIN"/>
    <property type="match status" value="1"/>
</dbReference>
<dbReference type="Pfam" id="PF00091">
    <property type="entry name" value="Tubulin"/>
    <property type="match status" value="1"/>
</dbReference>
<dbReference type="Pfam" id="PF03953">
    <property type="entry name" value="Tubulin_C"/>
    <property type="match status" value="1"/>
</dbReference>
<dbReference type="PRINTS" id="PR01163">
    <property type="entry name" value="BETATUBULIN"/>
</dbReference>
<dbReference type="PRINTS" id="PR01161">
    <property type="entry name" value="TUBULIN"/>
</dbReference>
<dbReference type="SMART" id="SM00864">
    <property type="entry name" value="Tubulin"/>
    <property type="match status" value="1"/>
</dbReference>
<dbReference type="SMART" id="SM00865">
    <property type="entry name" value="Tubulin_C"/>
    <property type="match status" value="1"/>
</dbReference>
<dbReference type="SUPFAM" id="SSF55307">
    <property type="entry name" value="Tubulin C-terminal domain-like"/>
    <property type="match status" value="1"/>
</dbReference>
<dbReference type="SUPFAM" id="SSF52490">
    <property type="entry name" value="Tubulin nucleotide-binding domain-like"/>
    <property type="match status" value="1"/>
</dbReference>
<dbReference type="PROSITE" id="PS00227">
    <property type="entry name" value="TUBULIN"/>
    <property type="match status" value="1"/>
</dbReference>
<dbReference type="PROSITE" id="PS00228">
    <property type="entry name" value="TUBULIN_B_AUTOREG"/>
    <property type="match status" value="1"/>
</dbReference>
<organism>
    <name type="scientific">Venturia inaequalis</name>
    <name type="common">Apple scab fungus</name>
    <dbReference type="NCBI Taxonomy" id="5025"/>
    <lineage>
        <taxon>Eukaryota</taxon>
        <taxon>Fungi</taxon>
        <taxon>Dikarya</taxon>
        <taxon>Ascomycota</taxon>
        <taxon>Pezizomycotina</taxon>
        <taxon>Dothideomycetes</taxon>
        <taxon>Pleosporomycetidae</taxon>
        <taxon>Venturiales</taxon>
        <taxon>Venturiaceae</taxon>
        <taxon>Venturia</taxon>
    </lineage>
</organism>
<name>TBB_VENIN</name>
<reference key="1">
    <citation type="submission" date="1992-08" db="EMBL/GenBank/DDBJ databases">
        <title>Characterization of mutations in the beta-tubulin gene of benomyl-resistant field strains of Venturia inaequalis and other plant pathogenic fungi.</title>
        <authorList>
            <person name="Koenraadt H."/>
            <person name="Somerville S.C."/>
            <person name="Jones A.L."/>
        </authorList>
    </citation>
    <scope>NUCLEOTIDE SEQUENCE [GENOMIC DNA]</scope>
    <source>
        <strain>WC</strain>
    </source>
</reference>
<protein>
    <recommendedName>
        <fullName>Tubulin beta chain</fullName>
    </recommendedName>
    <alternativeName>
        <fullName>Beta-tubulin</fullName>
    </alternativeName>
</protein>
<feature type="chain" id="PRO_0000048442" description="Tubulin beta chain">
    <location>
        <begin position="1"/>
        <end position="447"/>
    </location>
</feature>
<feature type="region of interest" description="Disordered" evidence="3">
    <location>
        <begin position="424"/>
        <end position="447"/>
    </location>
</feature>
<feature type="compositionally biased region" description="Acidic residues" evidence="3">
    <location>
        <begin position="432"/>
        <end position="447"/>
    </location>
</feature>
<feature type="binding site" evidence="2">
    <location>
        <position position="11"/>
    </location>
    <ligand>
        <name>GTP</name>
        <dbReference type="ChEBI" id="CHEBI:37565"/>
    </ligand>
</feature>
<feature type="binding site" evidence="1">
    <location>
        <position position="69"/>
    </location>
    <ligand>
        <name>GTP</name>
        <dbReference type="ChEBI" id="CHEBI:37565"/>
    </ligand>
</feature>
<feature type="binding site" evidence="1">
    <location>
        <position position="69"/>
    </location>
    <ligand>
        <name>Mg(2+)</name>
        <dbReference type="ChEBI" id="CHEBI:18420"/>
    </ligand>
</feature>
<feature type="binding site" evidence="2">
    <location>
        <position position="138"/>
    </location>
    <ligand>
        <name>GTP</name>
        <dbReference type="ChEBI" id="CHEBI:37565"/>
    </ligand>
</feature>
<feature type="binding site" evidence="2">
    <location>
        <position position="142"/>
    </location>
    <ligand>
        <name>GTP</name>
        <dbReference type="ChEBI" id="CHEBI:37565"/>
    </ligand>
</feature>
<feature type="binding site" evidence="2">
    <location>
        <position position="143"/>
    </location>
    <ligand>
        <name>GTP</name>
        <dbReference type="ChEBI" id="CHEBI:37565"/>
    </ligand>
</feature>
<feature type="binding site" evidence="2">
    <location>
        <position position="144"/>
    </location>
    <ligand>
        <name>GTP</name>
        <dbReference type="ChEBI" id="CHEBI:37565"/>
    </ligand>
</feature>
<feature type="binding site" evidence="2">
    <location>
        <position position="204"/>
    </location>
    <ligand>
        <name>GTP</name>
        <dbReference type="ChEBI" id="CHEBI:37565"/>
    </ligand>
</feature>
<feature type="binding site" evidence="2">
    <location>
        <position position="226"/>
    </location>
    <ligand>
        <name>GTP</name>
        <dbReference type="ChEBI" id="CHEBI:37565"/>
    </ligand>
</feature>